<evidence type="ECO:0000255" key="1">
    <source>
        <dbReference type="HAMAP-Rule" id="MF_00163"/>
    </source>
</evidence>
<evidence type="ECO:0007829" key="2">
    <source>
        <dbReference type="PDB" id="6JER"/>
    </source>
</evidence>
<evidence type="ECO:0007829" key="3">
    <source>
        <dbReference type="PDB" id="6JEV"/>
    </source>
</evidence>
<comment type="function">
    <text evidence="1">Removes the formyl group from the N-terminal Met of newly synthesized proteins. Requires at least a dipeptide for an efficient rate of reaction. N-terminal L-methionine is a prerequisite for activity but the enzyme has broad specificity at other positions.</text>
</comment>
<comment type="catalytic activity">
    <reaction evidence="1">
        <text>N-terminal N-formyl-L-methionyl-[peptide] + H2O = N-terminal L-methionyl-[peptide] + formate</text>
        <dbReference type="Rhea" id="RHEA:24420"/>
        <dbReference type="Rhea" id="RHEA-COMP:10639"/>
        <dbReference type="Rhea" id="RHEA-COMP:10640"/>
        <dbReference type="ChEBI" id="CHEBI:15377"/>
        <dbReference type="ChEBI" id="CHEBI:15740"/>
        <dbReference type="ChEBI" id="CHEBI:49298"/>
        <dbReference type="ChEBI" id="CHEBI:64731"/>
        <dbReference type="EC" id="3.5.1.88"/>
    </reaction>
</comment>
<comment type="cofactor">
    <cofactor evidence="1">
        <name>Fe(2+)</name>
        <dbReference type="ChEBI" id="CHEBI:29033"/>
    </cofactor>
    <text evidence="1">Binds 1 Fe(2+) ion.</text>
</comment>
<comment type="similarity">
    <text evidence="1">Belongs to the polypeptide deformylase family.</text>
</comment>
<name>DEF_ACIBS</name>
<organism>
    <name type="scientific">Acinetobacter baumannii (strain SDF)</name>
    <dbReference type="NCBI Taxonomy" id="509170"/>
    <lineage>
        <taxon>Bacteria</taxon>
        <taxon>Pseudomonadati</taxon>
        <taxon>Pseudomonadota</taxon>
        <taxon>Gammaproteobacteria</taxon>
        <taxon>Moraxellales</taxon>
        <taxon>Moraxellaceae</taxon>
        <taxon>Acinetobacter</taxon>
        <taxon>Acinetobacter calcoaceticus/baumannii complex</taxon>
    </lineage>
</organism>
<proteinExistence type="evidence at protein level"/>
<reference key="1">
    <citation type="journal article" date="2008" name="PLoS ONE">
        <title>Comparative analysis of Acinetobacters: three genomes for three lifestyles.</title>
        <authorList>
            <person name="Vallenet D."/>
            <person name="Nordmann P."/>
            <person name="Barbe V."/>
            <person name="Poirel L."/>
            <person name="Mangenot S."/>
            <person name="Bataille E."/>
            <person name="Dossat C."/>
            <person name="Gas S."/>
            <person name="Kreimeyer A."/>
            <person name="Lenoble P."/>
            <person name="Oztas S."/>
            <person name="Poulain J."/>
            <person name="Segurens B."/>
            <person name="Robert C."/>
            <person name="Abergel C."/>
            <person name="Claverie J.-M."/>
            <person name="Raoult D."/>
            <person name="Medigue C."/>
            <person name="Weissenbach J."/>
            <person name="Cruveiller S."/>
        </authorList>
    </citation>
    <scope>NUCLEOTIDE SEQUENCE [LARGE SCALE GENOMIC DNA]</scope>
    <source>
        <strain>SDF</strain>
    </source>
</reference>
<protein>
    <recommendedName>
        <fullName evidence="1">Peptide deformylase</fullName>
        <shortName evidence="1">PDF</shortName>
        <ecNumber evidence="1">3.5.1.88</ecNumber>
    </recommendedName>
    <alternativeName>
        <fullName evidence="1">Polypeptide deformylase</fullName>
    </alternativeName>
</protein>
<dbReference type="EC" id="3.5.1.88" evidence="1"/>
<dbReference type="EMBL" id="CU468230">
    <property type="protein sequence ID" value="CAO99588.1"/>
    <property type="molecule type" value="Genomic_DNA"/>
</dbReference>
<dbReference type="PDB" id="6JER">
    <property type="method" value="X-ray"/>
    <property type="resolution" value="2.40 A"/>
    <property type="chains" value="A/B=3-172"/>
</dbReference>
<dbReference type="PDB" id="6JET">
    <property type="method" value="X-ray"/>
    <property type="resolution" value="2.60 A"/>
    <property type="chains" value="A/B=2-172"/>
</dbReference>
<dbReference type="PDB" id="6JEU">
    <property type="method" value="X-ray"/>
    <property type="resolution" value="2.10 A"/>
    <property type="chains" value="A/B=2-171"/>
</dbReference>
<dbReference type="PDB" id="6JEV">
    <property type="method" value="X-ray"/>
    <property type="resolution" value="1.90 A"/>
    <property type="chains" value="A/B=3-173"/>
</dbReference>
<dbReference type="PDB" id="6JEW">
    <property type="method" value="X-ray"/>
    <property type="resolution" value="2.00 A"/>
    <property type="chains" value="A/B=3-173"/>
</dbReference>
<dbReference type="PDB" id="6JEX">
    <property type="method" value="X-ray"/>
    <property type="resolution" value="2.11 A"/>
    <property type="chains" value="A/B=2-173"/>
</dbReference>
<dbReference type="PDBsum" id="6JER"/>
<dbReference type="PDBsum" id="6JET"/>
<dbReference type="PDBsum" id="6JEU"/>
<dbReference type="PDBsum" id="6JEV"/>
<dbReference type="PDBsum" id="6JEW"/>
<dbReference type="PDBsum" id="6JEX"/>
<dbReference type="SMR" id="B0VNL8"/>
<dbReference type="KEGG" id="abm:ABSDF0185"/>
<dbReference type="HOGENOM" id="CLU_061901_2_0_6"/>
<dbReference type="Proteomes" id="UP000001741">
    <property type="component" value="Chromosome"/>
</dbReference>
<dbReference type="GO" id="GO:0046872">
    <property type="term" value="F:metal ion binding"/>
    <property type="evidence" value="ECO:0007669"/>
    <property type="project" value="UniProtKB-KW"/>
</dbReference>
<dbReference type="GO" id="GO:0042586">
    <property type="term" value="F:peptide deformylase activity"/>
    <property type="evidence" value="ECO:0007669"/>
    <property type="project" value="UniProtKB-UniRule"/>
</dbReference>
<dbReference type="GO" id="GO:0043686">
    <property type="term" value="P:co-translational protein modification"/>
    <property type="evidence" value="ECO:0007669"/>
    <property type="project" value="TreeGrafter"/>
</dbReference>
<dbReference type="GO" id="GO:0006412">
    <property type="term" value="P:translation"/>
    <property type="evidence" value="ECO:0007669"/>
    <property type="project" value="UniProtKB-UniRule"/>
</dbReference>
<dbReference type="CDD" id="cd00487">
    <property type="entry name" value="Pep_deformylase"/>
    <property type="match status" value="1"/>
</dbReference>
<dbReference type="FunFam" id="3.90.45.10:FF:000001">
    <property type="entry name" value="Peptide deformylase"/>
    <property type="match status" value="1"/>
</dbReference>
<dbReference type="Gene3D" id="3.90.45.10">
    <property type="entry name" value="Peptide deformylase"/>
    <property type="match status" value="1"/>
</dbReference>
<dbReference type="HAMAP" id="MF_00163">
    <property type="entry name" value="Pep_deformylase"/>
    <property type="match status" value="1"/>
</dbReference>
<dbReference type="InterPro" id="IPR023635">
    <property type="entry name" value="Peptide_deformylase"/>
</dbReference>
<dbReference type="InterPro" id="IPR036821">
    <property type="entry name" value="Peptide_deformylase_sf"/>
</dbReference>
<dbReference type="NCBIfam" id="TIGR00079">
    <property type="entry name" value="pept_deformyl"/>
    <property type="match status" value="1"/>
</dbReference>
<dbReference type="NCBIfam" id="NF001159">
    <property type="entry name" value="PRK00150.1-3"/>
    <property type="match status" value="1"/>
</dbReference>
<dbReference type="PANTHER" id="PTHR10458">
    <property type="entry name" value="PEPTIDE DEFORMYLASE"/>
    <property type="match status" value="1"/>
</dbReference>
<dbReference type="PANTHER" id="PTHR10458:SF21">
    <property type="entry name" value="PEPTIDE DEFORMYLASE"/>
    <property type="match status" value="1"/>
</dbReference>
<dbReference type="Pfam" id="PF01327">
    <property type="entry name" value="Pep_deformylase"/>
    <property type="match status" value="1"/>
</dbReference>
<dbReference type="PIRSF" id="PIRSF004749">
    <property type="entry name" value="Pep_def"/>
    <property type="match status" value="1"/>
</dbReference>
<dbReference type="PRINTS" id="PR01576">
    <property type="entry name" value="PDEFORMYLASE"/>
</dbReference>
<dbReference type="SUPFAM" id="SSF56420">
    <property type="entry name" value="Peptide deformylase"/>
    <property type="match status" value="1"/>
</dbReference>
<keyword id="KW-0002">3D-structure</keyword>
<keyword id="KW-0378">Hydrolase</keyword>
<keyword id="KW-0408">Iron</keyword>
<keyword id="KW-0479">Metal-binding</keyword>
<keyword id="KW-0648">Protein biosynthesis</keyword>
<gene>
    <name evidence="1" type="primary">def</name>
    <name type="ordered locus">ABSDF0185</name>
</gene>
<feature type="chain" id="PRO_1000097291" description="Peptide deformylase">
    <location>
        <begin position="1"/>
        <end position="176"/>
    </location>
</feature>
<feature type="active site" evidence="1">
    <location>
        <position position="135"/>
    </location>
</feature>
<feature type="binding site" evidence="1">
    <location>
        <position position="92"/>
    </location>
    <ligand>
        <name>Fe cation</name>
        <dbReference type="ChEBI" id="CHEBI:24875"/>
    </ligand>
</feature>
<feature type="binding site" evidence="1">
    <location>
        <position position="134"/>
    </location>
    <ligand>
        <name>Fe cation</name>
        <dbReference type="ChEBI" id="CHEBI:24875"/>
    </ligand>
</feature>
<feature type="binding site" evidence="1">
    <location>
        <position position="138"/>
    </location>
    <ligand>
        <name>Fe cation</name>
        <dbReference type="ChEBI" id="CHEBI:24875"/>
    </ligand>
</feature>
<feature type="helix" evidence="3">
    <location>
        <begin position="12"/>
        <end position="15"/>
    </location>
</feature>
<feature type="helix" evidence="3">
    <location>
        <begin position="26"/>
        <end position="41"/>
    </location>
</feature>
<feature type="strand" evidence="3">
    <location>
        <begin position="45"/>
        <end position="48"/>
    </location>
</feature>
<feature type="helix" evidence="3">
    <location>
        <begin position="49"/>
        <end position="52"/>
    </location>
</feature>
<feature type="strand" evidence="3">
    <location>
        <begin position="56"/>
        <end position="61"/>
    </location>
</feature>
<feature type="strand" evidence="2">
    <location>
        <begin position="64"/>
        <end position="67"/>
    </location>
</feature>
<feature type="strand" evidence="3">
    <location>
        <begin position="71"/>
        <end position="81"/>
    </location>
</feature>
<feature type="strand" evidence="3">
    <location>
        <begin position="85"/>
        <end position="90"/>
    </location>
</feature>
<feature type="strand" evidence="3">
    <location>
        <begin position="100"/>
        <end position="113"/>
    </location>
</feature>
<feature type="strand" evidence="3">
    <location>
        <begin position="119"/>
        <end position="125"/>
    </location>
</feature>
<feature type="helix" evidence="3">
    <location>
        <begin position="126"/>
        <end position="139"/>
    </location>
</feature>
<feature type="helix" evidence="3">
    <location>
        <begin position="144"/>
        <end position="147"/>
    </location>
</feature>
<feature type="helix" evidence="3">
    <location>
        <begin position="150"/>
        <end position="172"/>
    </location>
</feature>
<accession>B0VNL8</accession>
<sequence length="176" mass="20095">MALLPILSFPDPRLRTIAKPVEEVTDEIRQLAADMFETMYAAPGIGLAASQVDRHIQLIVMDLSESKDEPMVFINPKVTPLTEETQPYEEGCLSVPQIYDKVDRPSRVKIEAINLEGQAFEIEADGLLAVCIQHEMDHLNGKLFVDYLSPLKRQRVREKVEKIVRQREREKVAVKR</sequence>